<dbReference type="EC" id="7.4.2.8" evidence="1"/>
<dbReference type="EMBL" id="CP000821">
    <property type="protein sequence ID" value="ABV35031.1"/>
    <property type="molecule type" value="Genomic_DNA"/>
</dbReference>
<dbReference type="RefSeq" id="WP_012140768.1">
    <property type="nucleotide sequence ID" value="NC_009831.1"/>
</dbReference>
<dbReference type="SMR" id="A8FQA8"/>
<dbReference type="STRING" id="425104.Ssed_0418"/>
<dbReference type="KEGG" id="sse:Ssed_0418"/>
<dbReference type="eggNOG" id="COG0653">
    <property type="taxonomic scope" value="Bacteria"/>
</dbReference>
<dbReference type="HOGENOM" id="CLU_005314_3_0_6"/>
<dbReference type="OrthoDB" id="9805579at2"/>
<dbReference type="Proteomes" id="UP000002015">
    <property type="component" value="Chromosome"/>
</dbReference>
<dbReference type="GO" id="GO:0031522">
    <property type="term" value="C:cell envelope Sec protein transport complex"/>
    <property type="evidence" value="ECO:0007669"/>
    <property type="project" value="TreeGrafter"/>
</dbReference>
<dbReference type="GO" id="GO:0005829">
    <property type="term" value="C:cytosol"/>
    <property type="evidence" value="ECO:0007669"/>
    <property type="project" value="TreeGrafter"/>
</dbReference>
<dbReference type="GO" id="GO:0005886">
    <property type="term" value="C:plasma membrane"/>
    <property type="evidence" value="ECO:0007669"/>
    <property type="project" value="UniProtKB-SubCell"/>
</dbReference>
<dbReference type="GO" id="GO:0005524">
    <property type="term" value="F:ATP binding"/>
    <property type="evidence" value="ECO:0007669"/>
    <property type="project" value="UniProtKB-UniRule"/>
</dbReference>
<dbReference type="GO" id="GO:0046872">
    <property type="term" value="F:metal ion binding"/>
    <property type="evidence" value="ECO:0007669"/>
    <property type="project" value="UniProtKB-KW"/>
</dbReference>
<dbReference type="GO" id="GO:0008564">
    <property type="term" value="F:protein-exporting ATPase activity"/>
    <property type="evidence" value="ECO:0007669"/>
    <property type="project" value="UniProtKB-EC"/>
</dbReference>
<dbReference type="GO" id="GO:0065002">
    <property type="term" value="P:intracellular protein transmembrane transport"/>
    <property type="evidence" value="ECO:0007669"/>
    <property type="project" value="UniProtKB-UniRule"/>
</dbReference>
<dbReference type="GO" id="GO:0017038">
    <property type="term" value="P:protein import"/>
    <property type="evidence" value="ECO:0007669"/>
    <property type="project" value="InterPro"/>
</dbReference>
<dbReference type="GO" id="GO:0006605">
    <property type="term" value="P:protein targeting"/>
    <property type="evidence" value="ECO:0007669"/>
    <property type="project" value="UniProtKB-UniRule"/>
</dbReference>
<dbReference type="GO" id="GO:0043952">
    <property type="term" value="P:protein transport by the Sec complex"/>
    <property type="evidence" value="ECO:0007669"/>
    <property type="project" value="TreeGrafter"/>
</dbReference>
<dbReference type="CDD" id="cd17928">
    <property type="entry name" value="DEXDc_SecA"/>
    <property type="match status" value="1"/>
</dbReference>
<dbReference type="CDD" id="cd18803">
    <property type="entry name" value="SF2_C_secA"/>
    <property type="match status" value="1"/>
</dbReference>
<dbReference type="FunFam" id="1.10.3060.10:FF:000001">
    <property type="entry name" value="Preprotein translocase subunit SecA"/>
    <property type="match status" value="1"/>
</dbReference>
<dbReference type="FunFam" id="3.40.50.300:FF:000081">
    <property type="entry name" value="Preprotein translocase subunit SecA"/>
    <property type="match status" value="1"/>
</dbReference>
<dbReference type="FunFam" id="3.40.50.300:FF:000113">
    <property type="entry name" value="Preprotein translocase subunit SecA"/>
    <property type="match status" value="1"/>
</dbReference>
<dbReference type="FunFam" id="3.90.1440.10:FF:000001">
    <property type="entry name" value="Preprotein translocase subunit SecA"/>
    <property type="match status" value="1"/>
</dbReference>
<dbReference type="Gene3D" id="1.10.3060.10">
    <property type="entry name" value="Helical scaffold and wing domains of SecA"/>
    <property type="match status" value="1"/>
</dbReference>
<dbReference type="Gene3D" id="3.40.50.300">
    <property type="entry name" value="P-loop containing nucleotide triphosphate hydrolases"/>
    <property type="match status" value="2"/>
</dbReference>
<dbReference type="Gene3D" id="3.90.1440.10">
    <property type="entry name" value="SecA, preprotein cross-linking domain"/>
    <property type="match status" value="1"/>
</dbReference>
<dbReference type="HAMAP" id="MF_01382">
    <property type="entry name" value="SecA"/>
    <property type="match status" value="1"/>
</dbReference>
<dbReference type="InterPro" id="IPR014001">
    <property type="entry name" value="Helicase_ATP-bd"/>
</dbReference>
<dbReference type="InterPro" id="IPR001650">
    <property type="entry name" value="Helicase_C-like"/>
</dbReference>
<dbReference type="InterPro" id="IPR027417">
    <property type="entry name" value="P-loop_NTPase"/>
</dbReference>
<dbReference type="InterPro" id="IPR004027">
    <property type="entry name" value="SEC_C_motif"/>
</dbReference>
<dbReference type="InterPro" id="IPR000185">
    <property type="entry name" value="SecA"/>
</dbReference>
<dbReference type="InterPro" id="IPR020937">
    <property type="entry name" value="SecA_CS"/>
</dbReference>
<dbReference type="InterPro" id="IPR011115">
    <property type="entry name" value="SecA_DEAD"/>
</dbReference>
<dbReference type="InterPro" id="IPR014018">
    <property type="entry name" value="SecA_motor_DEAD"/>
</dbReference>
<dbReference type="InterPro" id="IPR011130">
    <property type="entry name" value="SecA_preprotein_X-link_dom"/>
</dbReference>
<dbReference type="InterPro" id="IPR044722">
    <property type="entry name" value="SecA_SF2_C"/>
</dbReference>
<dbReference type="InterPro" id="IPR011116">
    <property type="entry name" value="SecA_Wing/Scaffold"/>
</dbReference>
<dbReference type="InterPro" id="IPR036266">
    <property type="entry name" value="SecA_Wing/Scaffold_sf"/>
</dbReference>
<dbReference type="InterPro" id="IPR036670">
    <property type="entry name" value="SecA_X-link_sf"/>
</dbReference>
<dbReference type="NCBIfam" id="NF009538">
    <property type="entry name" value="PRK12904.1"/>
    <property type="match status" value="1"/>
</dbReference>
<dbReference type="NCBIfam" id="TIGR00963">
    <property type="entry name" value="secA"/>
    <property type="match status" value="1"/>
</dbReference>
<dbReference type="PANTHER" id="PTHR30612:SF0">
    <property type="entry name" value="CHLOROPLAST PROTEIN-TRANSPORTING ATPASE"/>
    <property type="match status" value="1"/>
</dbReference>
<dbReference type="PANTHER" id="PTHR30612">
    <property type="entry name" value="SECA INNER MEMBRANE COMPONENT OF SEC PROTEIN SECRETION SYSTEM"/>
    <property type="match status" value="1"/>
</dbReference>
<dbReference type="Pfam" id="PF21090">
    <property type="entry name" value="P-loop_SecA"/>
    <property type="match status" value="1"/>
</dbReference>
<dbReference type="Pfam" id="PF02810">
    <property type="entry name" value="SEC-C"/>
    <property type="match status" value="1"/>
</dbReference>
<dbReference type="Pfam" id="PF07517">
    <property type="entry name" value="SecA_DEAD"/>
    <property type="match status" value="1"/>
</dbReference>
<dbReference type="Pfam" id="PF01043">
    <property type="entry name" value="SecA_PP_bind"/>
    <property type="match status" value="1"/>
</dbReference>
<dbReference type="Pfam" id="PF07516">
    <property type="entry name" value="SecA_SW"/>
    <property type="match status" value="1"/>
</dbReference>
<dbReference type="PRINTS" id="PR00906">
    <property type="entry name" value="SECA"/>
</dbReference>
<dbReference type="SMART" id="SM00957">
    <property type="entry name" value="SecA_DEAD"/>
    <property type="match status" value="1"/>
</dbReference>
<dbReference type="SMART" id="SM00958">
    <property type="entry name" value="SecA_PP_bind"/>
    <property type="match status" value="1"/>
</dbReference>
<dbReference type="SUPFAM" id="SSF81886">
    <property type="entry name" value="Helical scaffold and wing domains of SecA"/>
    <property type="match status" value="1"/>
</dbReference>
<dbReference type="SUPFAM" id="SSF52540">
    <property type="entry name" value="P-loop containing nucleoside triphosphate hydrolases"/>
    <property type="match status" value="2"/>
</dbReference>
<dbReference type="SUPFAM" id="SSF81767">
    <property type="entry name" value="Pre-protein crosslinking domain of SecA"/>
    <property type="match status" value="1"/>
</dbReference>
<dbReference type="PROSITE" id="PS01312">
    <property type="entry name" value="SECA"/>
    <property type="match status" value="1"/>
</dbReference>
<dbReference type="PROSITE" id="PS51196">
    <property type="entry name" value="SECA_MOTOR_DEAD"/>
    <property type="match status" value="1"/>
</dbReference>
<accession>A8FQA8</accession>
<feature type="chain" id="PRO_1000087332" description="Protein translocase subunit SecA">
    <location>
        <begin position="1"/>
        <end position="907"/>
    </location>
</feature>
<feature type="region of interest" description="Disordered" evidence="2">
    <location>
        <begin position="869"/>
        <end position="897"/>
    </location>
</feature>
<feature type="compositionally biased region" description="Basic and acidic residues" evidence="2">
    <location>
        <begin position="878"/>
        <end position="887"/>
    </location>
</feature>
<feature type="binding site" evidence="1">
    <location>
        <position position="87"/>
    </location>
    <ligand>
        <name>ATP</name>
        <dbReference type="ChEBI" id="CHEBI:30616"/>
    </ligand>
</feature>
<feature type="binding site" evidence="1">
    <location>
        <begin position="105"/>
        <end position="109"/>
    </location>
    <ligand>
        <name>ATP</name>
        <dbReference type="ChEBI" id="CHEBI:30616"/>
    </ligand>
</feature>
<feature type="binding site" evidence="1">
    <location>
        <position position="512"/>
    </location>
    <ligand>
        <name>ATP</name>
        <dbReference type="ChEBI" id="CHEBI:30616"/>
    </ligand>
</feature>
<feature type="binding site" evidence="1">
    <location>
        <position position="891"/>
    </location>
    <ligand>
        <name>Zn(2+)</name>
        <dbReference type="ChEBI" id="CHEBI:29105"/>
    </ligand>
</feature>
<feature type="binding site" evidence="1">
    <location>
        <position position="893"/>
    </location>
    <ligand>
        <name>Zn(2+)</name>
        <dbReference type="ChEBI" id="CHEBI:29105"/>
    </ligand>
</feature>
<feature type="binding site" evidence="1">
    <location>
        <position position="902"/>
    </location>
    <ligand>
        <name>Zn(2+)</name>
        <dbReference type="ChEBI" id="CHEBI:29105"/>
    </ligand>
</feature>
<feature type="binding site" evidence="1">
    <location>
        <position position="903"/>
    </location>
    <ligand>
        <name>Zn(2+)</name>
        <dbReference type="ChEBI" id="CHEBI:29105"/>
    </ligand>
</feature>
<reference key="1">
    <citation type="submission" date="2007-08" db="EMBL/GenBank/DDBJ databases">
        <title>Complete sequence of Shewanella sediminis HAW-EB3.</title>
        <authorList>
            <consortium name="US DOE Joint Genome Institute"/>
            <person name="Copeland A."/>
            <person name="Lucas S."/>
            <person name="Lapidus A."/>
            <person name="Barry K."/>
            <person name="Glavina del Rio T."/>
            <person name="Dalin E."/>
            <person name="Tice H."/>
            <person name="Pitluck S."/>
            <person name="Chertkov O."/>
            <person name="Brettin T."/>
            <person name="Bruce D."/>
            <person name="Detter J.C."/>
            <person name="Han C."/>
            <person name="Schmutz J."/>
            <person name="Larimer F."/>
            <person name="Land M."/>
            <person name="Hauser L."/>
            <person name="Kyrpides N."/>
            <person name="Kim E."/>
            <person name="Zhao J.-S."/>
            <person name="Richardson P."/>
        </authorList>
    </citation>
    <scope>NUCLEOTIDE SEQUENCE [LARGE SCALE GENOMIC DNA]</scope>
    <source>
        <strain>HAW-EB3</strain>
    </source>
</reference>
<comment type="function">
    <text evidence="1">Part of the Sec protein translocase complex. Interacts with the SecYEG preprotein conducting channel. Has a central role in coupling the hydrolysis of ATP to the transfer of proteins into and across the cell membrane, serving both as a receptor for the preprotein-SecB complex and as an ATP-driven molecular motor driving the stepwise translocation of polypeptide chains across the membrane.</text>
</comment>
<comment type="catalytic activity">
    <reaction evidence="1">
        <text>ATP + H2O + cellular proteinSide 1 = ADP + phosphate + cellular proteinSide 2.</text>
        <dbReference type="EC" id="7.4.2.8"/>
    </reaction>
</comment>
<comment type="cofactor">
    <cofactor evidence="1">
        <name>Zn(2+)</name>
        <dbReference type="ChEBI" id="CHEBI:29105"/>
    </cofactor>
    <text evidence="1">May bind 1 zinc ion per subunit.</text>
</comment>
<comment type="subunit">
    <text evidence="1">Monomer and homodimer. Part of the essential Sec protein translocation apparatus which comprises SecA, SecYEG and auxiliary proteins SecDF-YajC and YidC.</text>
</comment>
<comment type="subcellular location">
    <subcellularLocation>
        <location evidence="1">Cell inner membrane</location>
        <topology evidence="1">Peripheral membrane protein</topology>
        <orientation evidence="1">Cytoplasmic side</orientation>
    </subcellularLocation>
    <subcellularLocation>
        <location evidence="1">Cytoplasm</location>
    </subcellularLocation>
    <text evidence="1">Distribution is 50-50.</text>
</comment>
<comment type="similarity">
    <text evidence="1">Belongs to the SecA family.</text>
</comment>
<organism>
    <name type="scientific">Shewanella sediminis (strain HAW-EB3)</name>
    <dbReference type="NCBI Taxonomy" id="425104"/>
    <lineage>
        <taxon>Bacteria</taxon>
        <taxon>Pseudomonadati</taxon>
        <taxon>Pseudomonadota</taxon>
        <taxon>Gammaproteobacteria</taxon>
        <taxon>Alteromonadales</taxon>
        <taxon>Shewanellaceae</taxon>
        <taxon>Shewanella</taxon>
    </lineage>
</organism>
<protein>
    <recommendedName>
        <fullName evidence="1">Protein translocase subunit SecA</fullName>
        <ecNumber evidence="1">7.4.2.8</ecNumber>
    </recommendedName>
</protein>
<name>SECA_SHESH</name>
<keyword id="KW-0067">ATP-binding</keyword>
<keyword id="KW-0997">Cell inner membrane</keyword>
<keyword id="KW-1003">Cell membrane</keyword>
<keyword id="KW-0963">Cytoplasm</keyword>
<keyword id="KW-0472">Membrane</keyword>
<keyword id="KW-0479">Metal-binding</keyword>
<keyword id="KW-0547">Nucleotide-binding</keyword>
<keyword id="KW-0653">Protein transport</keyword>
<keyword id="KW-1185">Reference proteome</keyword>
<keyword id="KW-1278">Translocase</keyword>
<keyword id="KW-0811">Translocation</keyword>
<keyword id="KW-0813">Transport</keyword>
<keyword id="KW-0862">Zinc</keyword>
<sequence length="907" mass="102858">MFGKILTKLFGSRNDRTLKSLGKTVTKINALEDEYEKLTDEELKAKTTAFRGRLESGETLDDVMSEAFAVVREASKRVFEMRHFDVQMLGGMVLDSNRIAEMRTGEGKTLTATLPAYLNGLTGKGVHVITVNDYLARRDAENNRPLFEFLGLSVGINVAGLGQQEKKAAYDADITYGTNNEFGFDYLRDNMAFSPQERVQRPLHYALIDEVDSILIDEARTPLIISGAAEDSSELYTKINTLIPHLVRQDKEDTEEEIGDGDYSIDEKAKQVHMTERGQEKVEVLLTERGMLAEGDSLYSAANISLLHHVNAALRAHTLFEKDVDYIVQDNEVIIVDEHTGRTMPGRRWSEGLHQAVEAKEGVHIQNENQTLASITFQNFFRQYEKLAGMTGTADTEAFEFQHIYGLDTVVIPTNRPMVRKDHADLVYLTPDEKYAAIIEDIRGCRERGQPVLVGTVSIEQSELLARLMKQEKIPHEVLNAKFHEREADIVAQAGRTGAVTIATNMAGRGTDIVLGGNWAMEIEVLTNPTDEQKAKIKTDWQVRHDEVVAAGGLHILGTERHESRRIDNQLRGRSGRQGDAGSSRFYLSMEDSLMRIFASDRVSSMMKKLGMEKGEAIEHPWVSRAIENAQRKVEARNFDIRKQLLEFDDVANDQRQVVYAQRNELMDAESIQDTIVNIQADVVNGLVDQYIPQQSVEELWDVPGLQTRLEQEYGLKMPVQEWLDKEDDLHEETLRERIVDTWVKSYQAKEEMVGEQVLRQFEKAVMLQTLDGLWKEHLAAMDHLRQGIHLRGYAQKNPKQEYKRESFELFQQMLETLKHDVISVLSKVQVQAQSDVEEMEERRRQEDAKIQRDYQHASAEAIVGAEEAESLSAHTPVVREGEKVGRNDPCPCGSGRKYKQCHGKLT</sequence>
<evidence type="ECO:0000255" key="1">
    <source>
        <dbReference type="HAMAP-Rule" id="MF_01382"/>
    </source>
</evidence>
<evidence type="ECO:0000256" key="2">
    <source>
        <dbReference type="SAM" id="MobiDB-lite"/>
    </source>
</evidence>
<proteinExistence type="inferred from homology"/>
<gene>
    <name evidence="1" type="primary">secA</name>
    <name type="ordered locus">Ssed_0418</name>
</gene>